<feature type="chain" id="PRO_0000081804" description="Negative elongation factor E">
    <location>
        <begin position="1"/>
        <end position="280"/>
    </location>
</feature>
<feature type="domain" description="RRM" evidence="2">
    <location>
        <begin position="166"/>
        <end position="236"/>
    </location>
</feature>
<feature type="region of interest" description="Disordered" evidence="3">
    <location>
        <begin position="25"/>
        <end position="112"/>
    </location>
</feature>
<feature type="region of interest" description="Disordered" evidence="3">
    <location>
        <begin position="141"/>
        <end position="166"/>
    </location>
</feature>
<feature type="compositionally biased region" description="Basic residues" evidence="3">
    <location>
        <begin position="25"/>
        <end position="36"/>
    </location>
</feature>
<feature type="compositionally biased region" description="Basic and acidic residues" evidence="3">
    <location>
        <begin position="49"/>
        <end position="61"/>
    </location>
</feature>
<feature type="compositionally biased region" description="Polar residues" evidence="3">
    <location>
        <begin position="73"/>
        <end position="83"/>
    </location>
</feature>
<feature type="compositionally biased region" description="Basic and acidic residues" evidence="3">
    <location>
        <begin position="87"/>
        <end position="96"/>
    </location>
</feature>
<feature type="compositionally biased region" description="Polar residues" evidence="3">
    <location>
        <begin position="97"/>
        <end position="112"/>
    </location>
</feature>
<feature type="compositionally biased region" description="Basic and acidic residues" evidence="3">
    <location>
        <begin position="141"/>
        <end position="163"/>
    </location>
</feature>
<evidence type="ECO:0000250" key="1"/>
<evidence type="ECO:0000255" key="2">
    <source>
        <dbReference type="PROSITE-ProRule" id="PRU00176"/>
    </source>
</evidence>
<evidence type="ECO:0000256" key="3">
    <source>
        <dbReference type="SAM" id="MobiDB-lite"/>
    </source>
</evidence>
<evidence type="ECO:0000269" key="4">
    <source>
    </source>
</evidence>
<evidence type="ECO:0000305" key="5"/>
<gene>
    <name type="primary">Nelf-E</name>
    <name type="synonym">anon-66Da</name>
    <name type="ORF">CG5994</name>
</gene>
<organism>
    <name type="scientific">Drosophila melanogaster</name>
    <name type="common">Fruit fly</name>
    <dbReference type="NCBI Taxonomy" id="7227"/>
    <lineage>
        <taxon>Eukaryota</taxon>
        <taxon>Metazoa</taxon>
        <taxon>Ecdysozoa</taxon>
        <taxon>Arthropoda</taxon>
        <taxon>Hexapoda</taxon>
        <taxon>Insecta</taxon>
        <taxon>Pterygota</taxon>
        <taxon>Neoptera</taxon>
        <taxon>Endopterygota</taxon>
        <taxon>Diptera</taxon>
        <taxon>Brachycera</taxon>
        <taxon>Muscomorpha</taxon>
        <taxon>Ephydroidea</taxon>
        <taxon>Drosophilidae</taxon>
        <taxon>Drosophila</taxon>
        <taxon>Sophophora</taxon>
    </lineage>
</organism>
<reference key="1">
    <citation type="journal article" date="1997" name="Mol. Gen. Genet.">
        <title>The Drosophila ribosomal protein L14-encoding gene, identified by a novel Minute mutation in a dense cluster of previously undescribed genes in cytogenetic region 66D.</title>
        <authorList>
            <person name="Saeboe-Larssen S."/>
            <person name="Urbanczyk Mohebi B."/>
            <person name="Lambertsson A."/>
        </authorList>
    </citation>
    <scope>NUCLEOTIDE SEQUENCE [GENOMIC DNA / MRNA]</scope>
</reference>
<reference key="2">
    <citation type="journal article" date="2000" name="Science">
        <title>The genome sequence of Drosophila melanogaster.</title>
        <authorList>
            <person name="Adams M.D."/>
            <person name="Celniker S.E."/>
            <person name="Holt R.A."/>
            <person name="Evans C.A."/>
            <person name="Gocayne J.D."/>
            <person name="Amanatides P.G."/>
            <person name="Scherer S.E."/>
            <person name="Li P.W."/>
            <person name="Hoskins R.A."/>
            <person name="Galle R.F."/>
            <person name="George R.A."/>
            <person name="Lewis S.E."/>
            <person name="Richards S."/>
            <person name="Ashburner M."/>
            <person name="Henderson S.N."/>
            <person name="Sutton G.G."/>
            <person name="Wortman J.R."/>
            <person name="Yandell M.D."/>
            <person name="Zhang Q."/>
            <person name="Chen L.X."/>
            <person name="Brandon R.C."/>
            <person name="Rogers Y.-H.C."/>
            <person name="Blazej R.G."/>
            <person name="Champe M."/>
            <person name="Pfeiffer B.D."/>
            <person name="Wan K.H."/>
            <person name="Doyle C."/>
            <person name="Baxter E.G."/>
            <person name="Helt G."/>
            <person name="Nelson C.R."/>
            <person name="Miklos G.L.G."/>
            <person name="Abril J.F."/>
            <person name="Agbayani A."/>
            <person name="An H.-J."/>
            <person name="Andrews-Pfannkoch C."/>
            <person name="Baldwin D."/>
            <person name="Ballew R.M."/>
            <person name="Basu A."/>
            <person name="Baxendale J."/>
            <person name="Bayraktaroglu L."/>
            <person name="Beasley E.M."/>
            <person name="Beeson K.Y."/>
            <person name="Benos P.V."/>
            <person name="Berman B.P."/>
            <person name="Bhandari D."/>
            <person name="Bolshakov S."/>
            <person name="Borkova D."/>
            <person name="Botchan M.R."/>
            <person name="Bouck J."/>
            <person name="Brokstein P."/>
            <person name="Brottier P."/>
            <person name="Burtis K.C."/>
            <person name="Busam D.A."/>
            <person name="Butler H."/>
            <person name="Cadieu E."/>
            <person name="Center A."/>
            <person name="Chandra I."/>
            <person name="Cherry J.M."/>
            <person name="Cawley S."/>
            <person name="Dahlke C."/>
            <person name="Davenport L.B."/>
            <person name="Davies P."/>
            <person name="de Pablos B."/>
            <person name="Delcher A."/>
            <person name="Deng Z."/>
            <person name="Mays A.D."/>
            <person name="Dew I."/>
            <person name="Dietz S.M."/>
            <person name="Dodson K."/>
            <person name="Doup L.E."/>
            <person name="Downes M."/>
            <person name="Dugan-Rocha S."/>
            <person name="Dunkov B.C."/>
            <person name="Dunn P."/>
            <person name="Durbin K.J."/>
            <person name="Evangelista C.C."/>
            <person name="Ferraz C."/>
            <person name="Ferriera S."/>
            <person name="Fleischmann W."/>
            <person name="Fosler C."/>
            <person name="Gabrielian A.E."/>
            <person name="Garg N.S."/>
            <person name="Gelbart W.M."/>
            <person name="Glasser K."/>
            <person name="Glodek A."/>
            <person name="Gong F."/>
            <person name="Gorrell J.H."/>
            <person name="Gu Z."/>
            <person name="Guan P."/>
            <person name="Harris M."/>
            <person name="Harris N.L."/>
            <person name="Harvey D.A."/>
            <person name="Heiman T.J."/>
            <person name="Hernandez J.R."/>
            <person name="Houck J."/>
            <person name="Hostin D."/>
            <person name="Houston K.A."/>
            <person name="Howland T.J."/>
            <person name="Wei M.-H."/>
            <person name="Ibegwam C."/>
            <person name="Jalali M."/>
            <person name="Kalush F."/>
            <person name="Karpen G.H."/>
            <person name="Ke Z."/>
            <person name="Kennison J.A."/>
            <person name="Ketchum K.A."/>
            <person name="Kimmel B.E."/>
            <person name="Kodira C.D."/>
            <person name="Kraft C.L."/>
            <person name="Kravitz S."/>
            <person name="Kulp D."/>
            <person name="Lai Z."/>
            <person name="Lasko P."/>
            <person name="Lei Y."/>
            <person name="Levitsky A.A."/>
            <person name="Li J.H."/>
            <person name="Li Z."/>
            <person name="Liang Y."/>
            <person name="Lin X."/>
            <person name="Liu X."/>
            <person name="Mattei B."/>
            <person name="McIntosh T.C."/>
            <person name="McLeod M.P."/>
            <person name="McPherson D."/>
            <person name="Merkulov G."/>
            <person name="Milshina N.V."/>
            <person name="Mobarry C."/>
            <person name="Morris J."/>
            <person name="Moshrefi A."/>
            <person name="Mount S.M."/>
            <person name="Moy M."/>
            <person name="Murphy B."/>
            <person name="Murphy L."/>
            <person name="Muzny D.M."/>
            <person name="Nelson D.L."/>
            <person name="Nelson D.R."/>
            <person name="Nelson K.A."/>
            <person name="Nixon K."/>
            <person name="Nusskern D.R."/>
            <person name="Pacleb J.M."/>
            <person name="Palazzolo M."/>
            <person name="Pittman G.S."/>
            <person name="Pan S."/>
            <person name="Pollard J."/>
            <person name="Puri V."/>
            <person name="Reese M.G."/>
            <person name="Reinert K."/>
            <person name="Remington K."/>
            <person name="Saunders R.D.C."/>
            <person name="Scheeler F."/>
            <person name="Shen H."/>
            <person name="Shue B.C."/>
            <person name="Siden-Kiamos I."/>
            <person name="Simpson M."/>
            <person name="Skupski M.P."/>
            <person name="Smith T.J."/>
            <person name="Spier E."/>
            <person name="Spradling A.C."/>
            <person name="Stapleton M."/>
            <person name="Strong R."/>
            <person name="Sun E."/>
            <person name="Svirskas R."/>
            <person name="Tector C."/>
            <person name="Turner R."/>
            <person name="Venter E."/>
            <person name="Wang A.H."/>
            <person name="Wang X."/>
            <person name="Wang Z.-Y."/>
            <person name="Wassarman D.A."/>
            <person name="Weinstock G.M."/>
            <person name="Weissenbach J."/>
            <person name="Williams S.M."/>
            <person name="Woodage T."/>
            <person name="Worley K.C."/>
            <person name="Wu D."/>
            <person name="Yang S."/>
            <person name="Yao Q.A."/>
            <person name="Ye J."/>
            <person name="Yeh R.-F."/>
            <person name="Zaveri J.S."/>
            <person name="Zhan M."/>
            <person name="Zhang G."/>
            <person name="Zhao Q."/>
            <person name="Zheng L."/>
            <person name="Zheng X.H."/>
            <person name="Zhong F.N."/>
            <person name="Zhong W."/>
            <person name="Zhou X."/>
            <person name="Zhu S.C."/>
            <person name="Zhu X."/>
            <person name="Smith H.O."/>
            <person name="Gibbs R.A."/>
            <person name="Myers E.W."/>
            <person name="Rubin G.M."/>
            <person name="Venter J.C."/>
        </authorList>
    </citation>
    <scope>NUCLEOTIDE SEQUENCE [LARGE SCALE GENOMIC DNA]</scope>
    <source>
        <strain>Berkeley</strain>
    </source>
</reference>
<reference key="3">
    <citation type="journal article" date="2002" name="Genome Biol.">
        <title>Annotation of the Drosophila melanogaster euchromatic genome: a systematic review.</title>
        <authorList>
            <person name="Misra S."/>
            <person name="Crosby M.A."/>
            <person name="Mungall C.J."/>
            <person name="Matthews B.B."/>
            <person name="Campbell K.S."/>
            <person name="Hradecky P."/>
            <person name="Huang Y."/>
            <person name="Kaminker J.S."/>
            <person name="Millburn G.H."/>
            <person name="Prochnik S.E."/>
            <person name="Smith C.D."/>
            <person name="Tupy J.L."/>
            <person name="Whitfield E.J."/>
            <person name="Bayraktaroglu L."/>
            <person name="Berman B.P."/>
            <person name="Bettencourt B.R."/>
            <person name="Celniker S.E."/>
            <person name="de Grey A.D.N.J."/>
            <person name="Drysdale R.A."/>
            <person name="Harris N.L."/>
            <person name="Richter J."/>
            <person name="Russo S."/>
            <person name="Schroeder A.J."/>
            <person name="Shu S.Q."/>
            <person name="Stapleton M."/>
            <person name="Yamada C."/>
            <person name="Ashburner M."/>
            <person name="Gelbart W.M."/>
            <person name="Rubin G.M."/>
            <person name="Lewis S.E."/>
        </authorList>
    </citation>
    <scope>GENOME REANNOTATION</scope>
    <source>
        <strain>Berkeley</strain>
    </source>
</reference>
<reference key="4">
    <citation type="journal article" date="2002" name="Genome Biol.">
        <title>A Drosophila full-length cDNA resource.</title>
        <authorList>
            <person name="Stapleton M."/>
            <person name="Carlson J.W."/>
            <person name="Brokstein P."/>
            <person name="Yu C."/>
            <person name="Champe M."/>
            <person name="George R.A."/>
            <person name="Guarin H."/>
            <person name="Kronmiller B."/>
            <person name="Pacleb J.M."/>
            <person name="Park S."/>
            <person name="Wan K.H."/>
            <person name="Rubin G.M."/>
            <person name="Celniker S.E."/>
        </authorList>
    </citation>
    <scope>NUCLEOTIDE SEQUENCE [LARGE SCALE MRNA]</scope>
    <source>
        <strain>Berkeley</strain>
        <tissue>Embryo</tissue>
    </source>
</reference>
<reference key="5">
    <citation type="journal article" date="2003" name="Genes Dev.">
        <title>NELF and DSIF cause promoter proximal pausing on the hsp70 promoter in Drosophila.</title>
        <authorList>
            <person name="Wu C.-H."/>
            <person name="Yamaguchi Y."/>
            <person name="Benjamin L.R."/>
            <person name="Horvat-Gordon M."/>
            <person name="Washinsky J."/>
            <person name="Enerly E."/>
            <person name="Larsson J."/>
            <person name="Lambertsson A."/>
            <person name="Handa H."/>
            <person name="Gilmour D."/>
        </authorList>
    </citation>
    <scope>FUNCTION</scope>
    <scope>SUBCELLULAR LOCATION</scope>
    <scope>INTERACTION WITH NELF-D</scope>
</reference>
<accession>P92204</accession>
<protein>
    <recommendedName>
        <fullName>Negative elongation factor E</fullName>
    </recommendedName>
</protein>
<proteinExistence type="evidence at protein level"/>
<keyword id="KW-0158">Chromosome</keyword>
<keyword id="KW-0539">Nucleus</keyword>
<keyword id="KW-1185">Reference proteome</keyword>
<keyword id="KW-0678">Repressor</keyword>
<keyword id="KW-0694">RNA-binding</keyword>
<keyword id="KW-0804">Transcription</keyword>
<keyword id="KW-0805">Transcription regulation</keyword>
<sequence>MVYIHFPNNLTEEEQMLQAKYQKLKKKKKALQAHKAPKPEPESSLTLKRPTDARDAREVARKLIKSGAIPAIQKQTKQDQTSFKRPKGQERAKRSTSETTVASYQPFSSTQNDVAQETIISEIIKEEPRRQNLYQHFATERDREERGMPEKVPMDTAQPEKPRAGNTIFVSGNKVTEDFLKKTFNDYGTIVNVSMEIEKSRGFVSFAKPESADRAIAEIHGKNVNGINLQVQLARRQPQIEPINDASSSAVWSSIAASKSQKGSHKDHREMVQYDEDFLL</sequence>
<dbReference type="EMBL" id="Y10015">
    <property type="protein sequence ID" value="CAA71120.1"/>
    <property type="molecule type" value="Genomic_DNA"/>
</dbReference>
<dbReference type="EMBL" id="Y10016">
    <property type="protein sequence ID" value="CAA71123.1"/>
    <property type="molecule type" value="mRNA"/>
</dbReference>
<dbReference type="EMBL" id="AE014296">
    <property type="protein sequence ID" value="AAF50394.1"/>
    <property type="molecule type" value="Genomic_DNA"/>
</dbReference>
<dbReference type="EMBL" id="AY071061">
    <property type="protein sequence ID" value="AAL48683.1"/>
    <property type="molecule type" value="mRNA"/>
</dbReference>
<dbReference type="RefSeq" id="NP_648241.1">
    <property type="nucleotide sequence ID" value="NM_139984.3"/>
</dbReference>
<dbReference type="SMR" id="P92204"/>
<dbReference type="BioGRID" id="64390">
    <property type="interactions" value="20"/>
</dbReference>
<dbReference type="ComplexPortal" id="CPX-2430">
    <property type="entry name" value="NELF negative elongation factor complex"/>
</dbReference>
<dbReference type="FunCoup" id="P92204">
    <property type="interactions" value="1248"/>
</dbReference>
<dbReference type="IntAct" id="P92204">
    <property type="interactions" value="9"/>
</dbReference>
<dbReference type="STRING" id="7227.FBpp0076374"/>
<dbReference type="PaxDb" id="7227-FBpp0076374"/>
<dbReference type="DNASU" id="38982"/>
<dbReference type="EnsemblMetazoa" id="FBtr0076650">
    <property type="protein sequence ID" value="FBpp0076374"/>
    <property type="gene ID" value="FBgn0017430"/>
</dbReference>
<dbReference type="GeneID" id="38982"/>
<dbReference type="KEGG" id="dme:Dmel_CG5994"/>
<dbReference type="AGR" id="FB:FBgn0017430"/>
<dbReference type="CTD" id="38982"/>
<dbReference type="FlyBase" id="FBgn0017430">
    <property type="gene designation" value="Nelf-E"/>
</dbReference>
<dbReference type="VEuPathDB" id="VectorBase:FBgn0017430"/>
<dbReference type="eggNOG" id="ENOG502QQQ4">
    <property type="taxonomic scope" value="Eukaryota"/>
</dbReference>
<dbReference type="HOGENOM" id="CLU_055643_1_0_1"/>
<dbReference type="InParanoid" id="P92204"/>
<dbReference type="OMA" id="SQKSAHK"/>
<dbReference type="OrthoDB" id="378874at2759"/>
<dbReference type="PhylomeDB" id="P92204"/>
<dbReference type="Reactome" id="R-DME-112382">
    <property type="pathway name" value="Formation of RNA Pol II elongation complex"/>
</dbReference>
<dbReference type="Reactome" id="R-DME-113418">
    <property type="pathway name" value="Formation of the Early Elongation Complex"/>
</dbReference>
<dbReference type="Reactome" id="R-DME-674695">
    <property type="pathway name" value="RNA Polymerase II Pre-transcription Events"/>
</dbReference>
<dbReference type="Reactome" id="R-DME-6796648">
    <property type="pathway name" value="TP53 Regulates Transcription of DNA Repair Genes"/>
</dbReference>
<dbReference type="Reactome" id="R-DME-75955">
    <property type="pathway name" value="RNA Polymerase II Transcription Elongation"/>
</dbReference>
<dbReference type="SignaLink" id="P92204"/>
<dbReference type="BioGRID-ORCS" id="38982">
    <property type="hits" value="0 hits in 1 CRISPR screen"/>
</dbReference>
<dbReference type="GenomeRNAi" id="38982"/>
<dbReference type="PRO" id="PR:P92204"/>
<dbReference type="Proteomes" id="UP000000803">
    <property type="component" value="Chromosome 3L"/>
</dbReference>
<dbReference type="Bgee" id="FBgn0017430">
    <property type="expression patterns" value="Expressed in T neuron T5c (Drosophila) in embryonic/larval optic lobe (Drosophila) and 85 other cell types or tissues"/>
</dbReference>
<dbReference type="GO" id="GO:0005694">
    <property type="term" value="C:chromosome"/>
    <property type="evidence" value="ECO:0007669"/>
    <property type="project" value="UniProtKB-SubCell"/>
</dbReference>
<dbReference type="GO" id="GO:0032021">
    <property type="term" value="C:NELF complex"/>
    <property type="evidence" value="ECO:0000353"/>
    <property type="project" value="FlyBase"/>
</dbReference>
<dbReference type="GO" id="GO:0005634">
    <property type="term" value="C:nucleus"/>
    <property type="evidence" value="ECO:0000314"/>
    <property type="project" value="FlyBase"/>
</dbReference>
<dbReference type="GO" id="GO:0008023">
    <property type="term" value="C:transcription elongation factor complex"/>
    <property type="evidence" value="ECO:0000353"/>
    <property type="project" value="UniProtKB"/>
</dbReference>
<dbReference type="GO" id="GO:0017053">
    <property type="term" value="C:transcription repressor complex"/>
    <property type="evidence" value="ECO:0000314"/>
    <property type="project" value="UniProtKB"/>
</dbReference>
<dbReference type="GO" id="GO:0003729">
    <property type="term" value="F:mRNA binding"/>
    <property type="evidence" value="ECO:0000250"/>
    <property type="project" value="FlyBase"/>
</dbReference>
<dbReference type="GO" id="GO:0003723">
    <property type="term" value="F:RNA binding"/>
    <property type="evidence" value="ECO:0000314"/>
    <property type="project" value="UniProtKB"/>
</dbReference>
<dbReference type="GO" id="GO:0032785">
    <property type="term" value="P:negative regulation of DNA-templated transcription, elongation"/>
    <property type="evidence" value="ECO:0000314"/>
    <property type="project" value="UniProtKB"/>
</dbReference>
<dbReference type="GO" id="GO:0000122">
    <property type="term" value="P:negative regulation of transcription by RNA polymerase II"/>
    <property type="evidence" value="ECO:0000314"/>
    <property type="project" value="UniProtKB"/>
</dbReference>
<dbReference type="GO" id="GO:0034244">
    <property type="term" value="P:negative regulation of transcription elongation by RNA polymerase II"/>
    <property type="evidence" value="ECO:0000314"/>
    <property type="project" value="FlyBase"/>
</dbReference>
<dbReference type="GO" id="GO:0045944">
    <property type="term" value="P:positive regulation of transcription by RNA polymerase II"/>
    <property type="evidence" value="ECO:0000315"/>
    <property type="project" value="FlyBase"/>
</dbReference>
<dbReference type="CDD" id="cd12305">
    <property type="entry name" value="RRM_NELFE"/>
    <property type="match status" value="1"/>
</dbReference>
<dbReference type="FunFam" id="3.30.70.330:FF:000448">
    <property type="entry name" value="Negative elongation factor E"/>
    <property type="match status" value="1"/>
</dbReference>
<dbReference type="Gene3D" id="3.30.70.330">
    <property type="match status" value="1"/>
</dbReference>
<dbReference type="InterPro" id="IPR033102">
    <property type="entry name" value="NELFE"/>
</dbReference>
<dbReference type="InterPro" id="IPR034637">
    <property type="entry name" value="NELFE_RRM"/>
</dbReference>
<dbReference type="InterPro" id="IPR012677">
    <property type="entry name" value="Nucleotide-bd_a/b_plait_sf"/>
</dbReference>
<dbReference type="InterPro" id="IPR035979">
    <property type="entry name" value="RBD_domain_sf"/>
</dbReference>
<dbReference type="InterPro" id="IPR000504">
    <property type="entry name" value="RRM_dom"/>
</dbReference>
<dbReference type="PANTHER" id="PTHR17250">
    <property type="entry name" value="NEGATIVE ELONGATION FACTOR E"/>
    <property type="match status" value="1"/>
</dbReference>
<dbReference type="PANTHER" id="PTHR17250:SF0">
    <property type="entry name" value="NEGATIVE ELONGATION FACTOR E"/>
    <property type="match status" value="1"/>
</dbReference>
<dbReference type="Pfam" id="PF00076">
    <property type="entry name" value="RRM_1"/>
    <property type="match status" value="1"/>
</dbReference>
<dbReference type="SMART" id="SM00360">
    <property type="entry name" value="RRM"/>
    <property type="match status" value="1"/>
</dbReference>
<dbReference type="SUPFAM" id="SSF54928">
    <property type="entry name" value="RNA-binding domain, RBD"/>
    <property type="match status" value="1"/>
</dbReference>
<dbReference type="PROSITE" id="PS50102">
    <property type="entry name" value="RRM"/>
    <property type="match status" value="1"/>
</dbReference>
<name>NELFE_DROME</name>
<comment type="function">
    <text evidence="4">Essential component of the NELF complex, a complex that negatively regulates the elongation of transcription by RNA polymerase II by RNA polymerase II. The NELF complex, which acts via an association with the DSIF complex, causes transcriptional pausing.</text>
</comment>
<comment type="subunit">
    <text evidence="1">Component of the NELF complex, which is at least composed of TH1/Nelf-D and Nelf-E.</text>
</comment>
<comment type="interaction">
    <interactant intactId="EBI-194490">
        <id>P92204</id>
    </interactant>
    <interactant intactId="EBI-136814">
        <id>P02828</id>
        <label>Hsp83</label>
    </interactant>
    <organismsDiffer>false</organismsDiffer>
    <experiments>2</experiments>
</comment>
<comment type="subcellular location">
    <subcellularLocation>
        <location evidence="4">Nucleus</location>
    </subcellularLocation>
    <subcellularLocation>
        <location evidence="4">Chromosome</location>
    </subcellularLocation>
    <text>Associates with polytene chromosomes. Associates with the hsp70 promoter when it is inactive, but not when it is activated. The NELF complex possibly dissociates from chromatin following phosphorylation of RNA polymerase II.</text>
</comment>
<comment type="similarity">
    <text evidence="5">Belongs to the RRM NELF-E family.</text>
</comment>